<feature type="chain" id="PRO_0000302709" description="ATP synthase subunit alpha">
    <location>
        <begin position="1"/>
        <end position="506"/>
    </location>
</feature>
<feature type="binding site" evidence="2">
    <location>
        <begin position="170"/>
        <end position="177"/>
    </location>
    <ligand>
        <name>ATP</name>
        <dbReference type="ChEBI" id="CHEBI:30616"/>
    </ligand>
</feature>
<feature type="site" description="Required for activity" evidence="2">
    <location>
        <position position="363"/>
    </location>
</feature>
<organism>
    <name type="scientific">Synechococcus sp. (strain WH7803)</name>
    <dbReference type="NCBI Taxonomy" id="32051"/>
    <lineage>
        <taxon>Bacteria</taxon>
        <taxon>Bacillati</taxon>
        <taxon>Cyanobacteriota</taxon>
        <taxon>Cyanophyceae</taxon>
        <taxon>Synechococcales</taxon>
        <taxon>Synechococcaceae</taxon>
        <taxon>Synechococcus</taxon>
    </lineage>
</organism>
<name>ATPA_SYNPW</name>
<keyword id="KW-0066">ATP synthesis</keyword>
<keyword id="KW-0067">ATP-binding</keyword>
<keyword id="KW-0139">CF(1)</keyword>
<keyword id="KW-0375">Hydrogen ion transport</keyword>
<keyword id="KW-0406">Ion transport</keyword>
<keyword id="KW-0472">Membrane</keyword>
<keyword id="KW-0547">Nucleotide-binding</keyword>
<keyword id="KW-1185">Reference proteome</keyword>
<keyword id="KW-0793">Thylakoid</keyword>
<keyword id="KW-1278">Translocase</keyword>
<keyword id="KW-0813">Transport</keyword>
<protein>
    <recommendedName>
        <fullName evidence="2">ATP synthase subunit alpha</fullName>
        <ecNumber evidence="2">7.1.2.2</ecNumber>
    </recommendedName>
    <alternativeName>
        <fullName evidence="2">ATP synthase F1 sector subunit alpha</fullName>
    </alternativeName>
    <alternativeName>
        <fullName evidence="2">F-ATPase subunit alpha</fullName>
    </alternativeName>
</protein>
<dbReference type="EC" id="7.1.2.2" evidence="2"/>
<dbReference type="EMBL" id="CT971583">
    <property type="protein sequence ID" value="CAK24443.1"/>
    <property type="molecule type" value="Genomic_DNA"/>
</dbReference>
<dbReference type="SMR" id="A5GNC8"/>
<dbReference type="STRING" id="32051.SynWH7803_2017"/>
<dbReference type="KEGG" id="syx:SynWH7803_2017"/>
<dbReference type="eggNOG" id="COG0056">
    <property type="taxonomic scope" value="Bacteria"/>
</dbReference>
<dbReference type="HOGENOM" id="CLU_010091_2_1_3"/>
<dbReference type="OrthoDB" id="9803053at2"/>
<dbReference type="Proteomes" id="UP000001566">
    <property type="component" value="Chromosome"/>
</dbReference>
<dbReference type="GO" id="GO:0031676">
    <property type="term" value="C:plasma membrane-derived thylakoid membrane"/>
    <property type="evidence" value="ECO:0007669"/>
    <property type="project" value="UniProtKB-SubCell"/>
</dbReference>
<dbReference type="GO" id="GO:0045259">
    <property type="term" value="C:proton-transporting ATP synthase complex"/>
    <property type="evidence" value="ECO:0007669"/>
    <property type="project" value="UniProtKB-KW"/>
</dbReference>
<dbReference type="GO" id="GO:0043531">
    <property type="term" value="F:ADP binding"/>
    <property type="evidence" value="ECO:0007669"/>
    <property type="project" value="TreeGrafter"/>
</dbReference>
<dbReference type="GO" id="GO:0005524">
    <property type="term" value="F:ATP binding"/>
    <property type="evidence" value="ECO:0007669"/>
    <property type="project" value="UniProtKB-UniRule"/>
</dbReference>
<dbReference type="GO" id="GO:0046933">
    <property type="term" value="F:proton-transporting ATP synthase activity, rotational mechanism"/>
    <property type="evidence" value="ECO:0007669"/>
    <property type="project" value="UniProtKB-UniRule"/>
</dbReference>
<dbReference type="CDD" id="cd18113">
    <property type="entry name" value="ATP-synt_F1_alpha_C"/>
    <property type="match status" value="1"/>
</dbReference>
<dbReference type="CDD" id="cd18116">
    <property type="entry name" value="ATP-synt_F1_alpha_N"/>
    <property type="match status" value="1"/>
</dbReference>
<dbReference type="CDD" id="cd01132">
    <property type="entry name" value="F1-ATPase_alpha_CD"/>
    <property type="match status" value="1"/>
</dbReference>
<dbReference type="FunFam" id="1.20.150.20:FF:000001">
    <property type="entry name" value="ATP synthase subunit alpha"/>
    <property type="match status" value="1"/>
</dbReference>
<dbReference type="FunFam" id="2.40.30.20:FF:000001">
    <property type="entry name" value="ATP synthase subunit alpha"/>
    <property type="match status" value="1"/>
</dbReference>
<dbReference type="FunFam" id="3.40.50.300:FF:000002">
    <property type="entry name" value="ATP synthase subunit alpha"/>
    <property type="match status" value="1"/>
</dbReference>
<dbReference type="Gene3D" id="2.40.30.20">
    <property type="match status" value="1"/>
</dbReference>
<dbReference type="Gene3D" id="1.20.150.20">
    <property type="entry name" value="ATP synthase alpha/beta chain, C-terminal domain"/>
    <property type="match status" value="1"/>
</dbReference>
<dbReference type="Gene3D" id="3.40.50.300">
    <property type="entry name" value="P-loop containing nucleotide triphosphate hydrolases"/>
    <property type="match status" value="1"/>
</dbReference>
<dbReference type="HAMAP" id="MF_01346">
    <property type="entry name" value="ATP_synth_alpha_bact"/>
    <property type="match status" value="1"/>
</dbReference>
<dbReference type="InterPro" id="IPR023366">
    <property type="entry name" value="ATP_synth_asu-like_sf"/>
</dbReference>
<dbReference type="InterPro" id="IPR000793">
    <property type="entry name" value="ATP_synth_asu_C"/>
</dbReference>
<dbReference type="InterPro" id="IPR038376">
    <property type="entry name" value="ATP_synth_asu_C_sf"/>
</dbReference>
<dbReference type="InterPro" id="IPR033732">
    <property type="entry name" value="ATP_synth_F1_a_nt-bd_dom"/>
</dbReference>
<dbReference type="InterPro" id="IPR005294">
    <property type="entry name" value="ATP_synth_F1_asu"/>
</dbReference>
<dbReference type="InterPro" id="IPR020003">
    <property type="entry name" value="ATPase_a/bsu_AS"/>
</dbReference>
<dbReference type="InterPro" id="IPR004100">
    <property type="entry name" value="ATPase_F1/V1/A1_a/bsu_N"/>
</dbReference>
<dbReference type="InterPro" id="IPR036121">
    <property type="entry name" value="ATPase_F1/V1/A1_a/bsu_N_sf"/>
</dbReference>
<dbReference type="InterPro" id="IPR000194">
    <property type="entry name" value="ATPase_F1/V1/A1_a/bsu_nucl-bd"/>
</dbReference>
<dbReference type="InterPro" id="IPR027417">
    <property type="entry name" value="P-loop_NTPase"/>
</dbReference>
<dbReference type="NCBIfam" id="TIGR00962">
    <property type="entry name" value="atpA"/>
    <property type="match status" value="1"/>
</dbReference>
<dbReference type="NCBIfam" id="NF009884">
    <property type="entry name" value="PRK13343.1"/>
    <property type="match status" value="1"/>
</dbReference>
<dbReference type="PANTHER" id="PTHR48082">
    <property type="entry name" value="ATP SYNTHASE SUBUNIT ALPHA, MITOCHONDRIAL"/>
    <property type="match status" value="1"/>
</dbReference>
<dbReference type="PANTHER" id="PTHR48082:SF2">
    <property type="entry name" value="ATP SYNTHASE SUBUNIT ALPHA, MITOCHONDRIAL"/>
    <property type="match status" value="1"/>
</dbReference>
<dbReference type="Pfam" id="PF00006">
    <property type="entry name" value="ATP-synt_ab"/>
    <property type="match status" value="1"/>
</dbReference>
<dbReference type="Pfam" id="PF00306">
    <property type="entry name" value="ATP-synt_ab_C"/>
    <property type="match status" value="1"/>
</dbReference>
<dbReference type="Pfam" id="PF02874">
    <property type="entry name" value="ATP-synt_ab_N"/>
    <property type="match status" value="1"/>
</dbReference>
<dbReference type="PIRSF" id="PIRSF039088">
    <property type="entry name" value="F_ATPase_subunit_alpha"/>
    <property type="match status" value="1"/>
</dbReference>
<dbReference type="SUPFAM" id="SSF47917">
    <property type="entry name" value="C-terminal domain of alpha and beta subunits of F1 ATP synthase"/>
    <property type="match status" value="1"/>
</dbReference>
<dbReference type="SUPFAM" id="SSF50615">
    <property type="entry name" value="N-terminal domain of alpha and beta subunits of F1 ATP synthase"/>
    <property type="match status" value="1"/>
</dbReference>
<dbReference type="SUPFAM" id="SSF52540">
    <property type="entry name" value="P-loop containing nucleoside triphosphate hydrolases"/>
    <property type="match status" value="1"/>
</dbReference>
<dbReference type="PROSITE" id="PS00152">
    <property type="entry name" value="ATPASE_ALPHA_BETA"/>
    <property type="match status" value="1"/>
</dbReference>
<sequence>MVSIRPDEISAILKQQIEDYDKSVSVSNVGSVLQVGDGIARVYGLQQVMAGELVEFEDGTEGIALNLEDDNVGAVLMGEGLGIQEGSTVRATGKIASVPVGDGLLGRVVNPLGVALDGKGDLGTTESRLIESPAPGIIQRKSVHEPMQTGITAIDAMIPIGRGQRELIIGDRQTGKTAIAIDTILNQKDQDVVCVYVAIGQKAASVAQVTEVLRERGALDYTVIVAANASDPAALQYLAPYTGASIAEYFMYKGKATLVIYDDLSKQAQAYRQMSLLLRRPPGREAYPGDVFYCHSRLLERAAKLSDAMGKGSMTALPIIETQAGDVSAYIPTNVISITDGQVFLSSDLFNSGLRPAINVGISVSRVGGAAQTKAIKKIAGTLKLELAQFDELAAFSQFASDLDAATQKQLGRGKRLRELLKQPQFSPLILAEQVAIVYAGVKGLIDDVPVDQVVQFSRELREYLKSNKPEFIEKIQTEKVLSPEAETMLKEAVAEVTSTMLATAN</sequence>
<gene>
    <name evidence="2" type="primary">atpA</name>
    <name type="ordered locus">SynWH7803_2017</name>
</gene>
<evidence type="ECO:0000250" key="1"/>
<evidence type="ECO:0000255" key="2">
    <source>
        <dbReference type="HAMAP-Rule" id="MF_01346"/>
    </source>
</evidence>
<reference key="1">
    <citation type="submission" date="2006-05" db="EMBL/GenBank/DDBJ databases">
        <authorList>
            <consortium name="Genoscope"/>
        </authorList>
    </citation>
    <scope>NUCLEOTIDE SEQUENCE [LARGE SCALE GENOMIC DNA]</scope>
    <source>
        <strain>WH7803</strain>
    </source>
</reference>
<comment type="function">
    <text evidence="2">Produces ATP from ADP in the presence of a proton gradient across the membrane. The alpha chain is a regulatory subunit.</text>
</comment>
<comment type="catalytic activity">
    <reaction evidence="2">
        <text>ATP + H2O + 4 H(+)(in) = ADP + phosphate + 5 H(+)(out)</text>
        <dbReference type="Rhea" id="RHEA:57720"/>
        <dbReference type="ChEBI" id="CHEBI:15377"/>
        <dbReference type="ChEBI" id="CHEBI:15378"/>
        <dbReference type="ChEBI" id="CHEBI:30616"/>
        <dbReference type="ChEBI" id="CHEBI:43474"/>
        <dbReference type="ChEBI" id="CHEBI:456216"/>
        <dbReference type="EC" id="7.1.2.2"/>
    </reaction>
</comment>
<comment type="subunit">
    <text evidence="1">F-type ATPases have 2 components, CF(1) - the catalytic core - and CF(0) - the membrane proton channel. CF(1) has five subunits: alpha(3), beta(3), gamma(1), delta(1), epsilon(1). CF(0) has four main subunits: a(1), b(1), b'(1) and c(9-12) (By similarity).</text>
</comment>
<comment type="subcellular location">
    <subcellularLocation>
        <location evidence="2">Cellular thylakoid membrane</location>
        <topology evidence="2">Peripheral membrane protein</topology>
    </subcellularLocation>
</comment>
<comment type="similarity">
    <text evidence="2">Belongs to the ATPase alpha/beta chains family.</text>
</comment>
<accession>A5GNC8</accession>
<proteinExistence type="inferred from homology"/>